<keyword id="KW-0903">Direct protein sequencing</keyword>
<keyword id="KW-1015">Disulfide bond</keyword>
<keyword id="KW-0249">Electron transport</keyword>
<keyword id="KW-0408">Iron</keyword>
<keyword id="KW-0472">Membrane</keyword>
<keyword id="KW-0479">Metal-binding</keyword>
<keyword id="KW-0496">Mitochondrion</keyword>
<keyword id="KW-0999">Mitochondrion inner membrane</keyword>
<keyword id="KW-0560">Oxidoreductase</keyword>
<keyword id="KW-1185">Reference proteome</keyword>
<keyword id="KW-0679">Respiratory chain</keyword>
<keyword id="KW-0809">Transit peptide</keyword>
<keyword id="KW-0812">Transmembrane</keyword>
<keyword id="KW-1133">Transmembrane helix</keyword>
<keyword id="KW-0813">Transport</keyword>
<name>AOX2_SOYBN</name>
<evidence type="ECO:0000250" key="1"/>
<evidence type="ECO:0000250" key="2">
    <source>
        <dbReference type="UniProtKB" id="Q26710"/>
    </source>
</evidence>
<evidence type="ECO:0000250" key="3">
    <source>
        <dbReference type="UniProtKB" id="Q39219"/>
    </source>
</evidence>
<evidence type="ECO:0000250" key="4">
    <source>
        <dbReference type="UniProtKB" id="Q41224"/>
    </source>
</evidence>
<evidence type="ECO:0000255" key="5"/>
<evidence type="ECO:0000269" key="6">
    <source>
    </source>
</evidence>
<evidence type="ECO:0000305" key="7"/>
<gene>
    <name type="primary">AOX2</name>
</gene>
<comment type="function">
    <text evidence="1">Catalyzes the cyanide-resistant oxidation of ubiquinol and the reduction of molecular oxygen to water, but does not translocate protons and consequently is not linked to oxidative phosphorylation. May increase respiration when the cytochrome respiratory pathway is restricted, or in response to low temperatures (By similarity).</text>
</comment>
<comment type="catalytic activity">
    <reaction>
        <text>2 a ubiquinol + O2 = 2 a ubiquinone + 2 H2O</text>
        <dbReference type="Rhea" id="RHEA:30255"/>
        <dbReference type="Rhea" id="RHEA-COMP:9565"/>
        <dbReference type="Rhea" id="RHEA-COMP:9566"/>
        <dbReference type="ChEBI" id="CHEBI:15377"/>
        <dbReference type="ChEBI" id="CHEBI:15379"/>
        <dbReference type="ChEBI" id="CHEBI:16389"/>
        <dbReference type="ChEBI" id="CHEBI:17976"/>
        <dbReference type="EC" id="1.10.3.11"/>
    </reaction>
</comment>
<comment type="cofactor">
    <cofactor evidence="3">
        <name>Fe cation</name>
        <dbReference type="ChEBI" id="CHEBI:24875"/>
    </cofactor>
    <text evidence="3">Binds 2 iron ions per subunit.</text>
</comment>
<comment type="subunit">
    <text evidence="7">Homodimer; disulfide-linked.</text>
</comment>
<comment type="subcellular location">
    <subcellularLocation>
        <location evidence="7">Mitochondrion inner membrane</location>
        <topology evidence="7">Multi-pass membrane protein</topology>
    </subcellularLocation>
    <text>Mitochondrial, possibly in the inner surface of the inner mitochondrial membrane.</text>
</comment>
<comment type="developmental stage">
    <text evidence="6">Increased expression in developing cotyledons between days 5 and 7 but thereafter relatively constant.</text>
</comment>
<comment type="similarity">
    <text evidence="7">Belongs to the alternative oxidase family.</text>
</comment>
<organism>
    <name type="scientific">Glycine max</name>
    <name type="common">Soybean</name>
    <name type="synonym">Glycine hispida</name>
    <dbReference type="NCBI Taxonomy" id="3847"/>
    <lineage>
        <taxon>Eukaryota</taxon>
        <taxon>Viridiplantae</taxon>
        <taxon>Streptophyta</taxon>
        <taxon>Embryophyta</taxon>
        <taxon>Tracheophyta</taxon>
        <taxon>Spermatophyta</taxon>
        <taxon>Magnoliopsida</taxon>
        <taxon>eudicotyledons</taxon>
        <taxon>Gunneridae</taxon>
        <taxon>Pentapetalae</taxon>
        <taxon>rosids</taxon>
        <taxon>fabids</taxon>
        <taxon>Fabales</taxon>
        <taxon>Fabaceae</taxon>
        <taxon>Papilionoideae</taxon>
        <taxon>50 kb inversion clade</taxon>
        <taxon>NPAAA clade</taxon>
        <taxon>indigoferoid/millettioid clade</taxon>
        <taxon>Phaseoleae</taxon>
        <taxon>Glycine</taxon>
        <taxon>Glycine subgen. Soja</taxon>
    </lineage>
</organism>
<protein>
    <recommendedName>
        <fullName>Ubiquinol oxidase 2, mitochondrial</fullName>
        <ecNumber>1.10.3.11</ecNumber>
    </recommendedName>
    <alternativeName>
        <fullName>Alternative oxidase 2</fullName>
    </alternativeName>
</protein>
<dbReference type="EC" id="1.10.3.11"/>
<dbReference type="EMBL" id="U87906">
    <property type="protein sequence ID" value="AAB97285.1"/>
    <property type="molecule type" value="mRNA"/>
</dbReference>
<dbReference type="EMBL" id="S81470">
    <property type="protein sequence ID" value="AAB36072.1"/>
    <property type="molecule type" value="Genomic_DNA"/>
</dbReference>
<dbReference type="PIR" id="T08850">
    <property type="entry name" value="T08850"/>
</dbReference>
<dbReference type="RefSeq" id="NP_001235766.1">
    <property type="nucleotide sequence ID" value="NM_001248837.1"/>
</dbReference>
<dbReference type="SMR" id="Q41266"/>
<dbReference type="STRING" id="3847.Q41266"/>
<dbReference type="PaxDb" id="3847-GLYMA08G07700.1"/>
<dbReference type="GeneID" id="547897"/>
<dbReference type="KEGG" id="gmx:547897"/>
<dbReference type="eggNOG" id="ENOG502QSB5">
    <property type="taxonomic scope" value="Eukaryota"/>
</dbReference>
<dbReference type="InParanoid" id="Q41266"/>
<dbReference type="OrthoDB" id="16906at2759"/>
<dbReference type="Proteomes" id="UP000008827">
    <property type="component" value="Unplaced"/>
</dbReference>
<dbReference type="GO" id="GO:0005743">
    <property type="term" value="C:mitochondrial inner membrane"/>
    <property type="evidence" value="ECO:0007669"/>
    <property type="project" value="UniProtKB-SubCell"/>
</dbReference>
<dbReference type="GO" id="GO:0005739">
    <property type="term" value="C:mitochondrion"/>
    <property type="evidence" value="ECO:0000318"/>
    <property type="project" value="GO_Central"/>
</dbReference>
<dbReference type="GO" id="GO:0009916">
    <property type="term" value="F:alternative oxidase activity"/>
    <property type="evidence" value="ECO:0000318"/>
    <property type="project" value="GO_Central"/>
</dbReference>
<dbReference type="GO" id="GO:0046872">
    <property type="term" value="F:metal ion binding"/>
    <property type="evidence" value="ECO:0007669"/>
    <property type="project" value="UniProtKB-KW"/>
</dbReference>
<dbReference type="GO" id="GO:0106292">
    <property type="term" value="F:superoxide-generating NADPH oxidase activity"/>
    <property type="evidence" value="ECO:0007669"/>
    <property type="project" value="UniProtKB-ARBA"/>
</dbReference>
<dbReference type="GO" id="GO:0102721">
    <property type="term" value="F:ubiquinol:oxygen oxidoreductase activity"/>
    <property type="evidence" value="ECO:0007669"/>
    <property type="project" value="UniProtKB-EC"/>
</dbReference>
<dbReference type="GO" id="GO:0010230">
    <property type="term" value="P:alternative respiration"/>
    <property type="evidence" value="ECO:0000318"/>
    <property type="project" value="GO_Central"/>
</dbReference>
<dbReference type="CDD" id="cd01053">
    <property type="entry name" value="AOX"/>
    <property type="match status" value="1"/>
</dbReference>
<dbReference type="FunFam" id="1.20.1260.140:FF:000001">
    <property type="entry name" value="Ubiquinol oxidase"/>
    <property type="match status" value="1"/>
</dbReference>
<dbReference type="Gene3D" id="1.20.1260.140">
    <property type="entry name" value="Alternative oxidase"/>
    <property type="match status" value="1"/>
</dbReference>
<dbReference type="InterPro" id="IPR002680">
    <property type="entry name" value="AOX"/>
</dbReference>
<dbReference type="InterPro" id="IPR038659">
    <property type="entry name" value="AOX_sf"/>
</dbReference>
<dbReference type="PANTHER" id="PTHR31803">
    <property type="entry name" value="ALTERNATIVE OXIDASE"/>
    <property type="match status" value="1"/>
</dbReference>
<dbReference type="PANTHER" id="PTHR31803:SF6">
    <property type="entry name" value="UBIQUINOL OXIDASE 2, MITOCHONDRIAL"/>
    <property type="match status" value="1"/>
</dbReference>
<dbReference type="Pfam" id="PF01786">
    <property type="entry name" value="AOX"/>
    <property type="match status" value="1"/>
</dbReference>
<sequence>MKLTALNSTVRRALLNGRNQNGNRLGSAALMPYAAAETRLLCAGGANGWFFYWKRTMVSPAEAKVPEKEKEKEKAKAEKSVVESSYWGISRPKVVREDGTEWPWNCFMPWESYRSNVSIDLTKHHVPKNVLDKVAYRTVKLLRIPTDLFFKRRYGCRAMMLETVAAVPGMVGGMLLHLRSLRKFQQSGGWIKALLEEAENERMHLMTMVELVKPKWYERLLVLAVQGVFFNAFFVLYILSPKVAHRIVGYLEEEAIHSYTEYLKDLESGAIENVPAPAIAIDYWRLPKDARLKDVITVIRADEAHHRDVNHFASDIHFQGKELREAPAPIGYH</sequence>
<feature type="transit peptide" description="Mitochondrion" evidence="5">
    <location>
        <begin position="1"/>
        <end status="unknown"/>
    </location>
</feature>
<feature type="chain" id="PRO_0000001738" description="Ubiquinol oxidase 2, mitochondrial">
    <location>
        <begin status="unknown"/>
        <end position="333"/>
    </location>
</feature>
<feature type="transmembrane region" description="Helical" evidence="5">
    <location>
        <begin position="158"/>
        <end position="178"/>
    </location>
</feature>
<feature type="transmembrane region" description="Helical" evidence="5">
    <location>
        <begin position="220"/>
        <end position="240"/>
    </location>
</feature>
<feature type="binding site" evidence="2">
    <location>
        <position position="162"/>
    </location>
    <ligand>
        <name>Fe cation</name>
        <dbReference type="ChEBI" id="CHEBI:24875"/>
        <label>1</label>
    </ligand>
</feature>
<feature type="binding site" evidence="2">
    <location>
        <position position="201"/>
    </location>
    <ligand>
        <name>Fe cation</name>
        <dbReference type="ChEBI" id="CHEBI:24875"/>
        <label>1</label>
    </ligand>
</feature>
<feature type="binding site" evidence="2">
    <location>
        <position position="201"/>
    </location>
    <ligand>
        <name>Fe cation</name>
        <dbReference type="ChEBI" id="CHEBI:24875"/>
        <label>2</label>
    </ligand>
</feature>
<feature type="binding site" evidence="2">
    <location>
        <position position="204"/>
    </location>
    <ligand>
        <name>Fe cation</name>
        <dbReference type="ChEBI" id="CHEBI:24875"/>
        <label>1</label>
    </ligand>
</feature>
<feature type="binding site" evidence="2">
    <location>
        <position position="252"/>
    </location>
    <ligand>
        <name>Fe cation</name>
        <dbReference type="ChEBI" id="CHEBI:24875"/>
        <label>2</label>
    </ligand>
</feature>
<feature type="binding site" evidence="2">
    <location>
        <position position="303"/>
    </location>
    <ligand>
        <name>Fe cation</name>
        <dbReference type="ChEBI" id="CHEBI:24875"/>
        <label>1</label>
    </ligand>
</feature>
<feature type="binding site" evidence="2">
    <location>
        <position position="303"/>
    </location>
    <ligand>
        <name>Fe cation</name>
        <dbReference type="ChEBI" id="CHEBI:24875"/>
        <label>2</label>
    </ligand>
</feature>
<feature type="binding site" evidence="2">
    <location>
        <position position="306"/>
    </location>
    <ligand>
        <name>Fe cation</name>
        <dbReference type="ChEBI" id="CHEBI:24875"/>
        <label>2</label>
    </ligand>
</feature>
<feature type="disulfide bond" description="Interchain" evidence="4">
    <location>
        <position position="106"/>
    </location>
</feature>
<proteinExistence type="evidence at protein level"/>
<reference key="1">
    <citation type="journal article" date="1997" name="Plant Physiol.">
        <title>Differential expression of the multigene family encoding the soybean mitochondrial alternative oxidase.</title>
        <authorList>
            <person name="Finnegan P.M."/>
            <person name="Whelan J."/>
            <person name="Millar A.H."/>
            <person name="Zhang Q."/>
            <person name="Smith M.K."/>
            <person name="Wiskich J.T."/>
            <person name="Day D.A."/>
        </authorList>
    </citation>
    <scope>NUCLEOTIDE SEQUENCE [MRNA]</scope>
    <scope>PARTIAL PROTEIN SEQUENCE</scope>
</reference>
<reference key="2">
    <citation type="journal article" date="1996" name="Planta">
        <title>The alternative oxidase is encoded in a multigene family in soybean.</title>
        <authorList>
            <person name="Whelan J."/>
            <person name="Millar A.H."/>
            <person name="Day D.A."/>
        </authorList>
    </citation>
    <scope>NUCLEOTIDE SEQUENCE [GENOMIC DNA] OF 206-245</scope>
</reference>
<reference key="3">
    <citation type="journal article" date="1998" name="Plant Physiol.">
        <title>Differential expression of alternative oxidase genes in soybean cotyledons during postgerminative development.</title>
        <authorList>
            <person name="McCabe T.C."/>
            <person name="Finnegan P.M."/>
            <person name="Harvey Millar A."/>
            <person name="Day D.A."/>
            <person name="Whelan J."/>
        </authorList>
    </citation>
    <scope>DEVELOPMENTAL STAGE</scope>
</reference>
<reference key="4">
    <citation type="journal article" date="1999" name="FEBS Lett.">
        <title>A revised model of the active site of alternative oxidase.</title>
        <authorList>
            <person name="Andersson M.E."/>
            <person name="Nordlund P."/>
        </authorList>
    </citation>
    <scope>IRON-BINDING SITES</scope>
</reference>
<accession>Q41266</accession>